<name>TMCAL_OCEIH</name>
<reference key="1">
    <citation type="journal article" date="2002" name="Nucleic Acids Res.">
        <title>Genome sequence of Oceanobacillus iheyensis isolated from the Iheya Ridge and its unexpected adaptive capabilities to extreme environments.</title>
        <authorList>
            <person name="Takami H."/>
            <person name="Takaki Y."/>
            <person name="Uchiyama I."/>
        </authorList>
    </citation>
    <scope>NUCLEOTIDE SEQUENCE [LARGE SCALE GENOMIC DNA]</scope>
    <source>
        <strain>DSM 14371 / CIP 107618 / JCM 11309 / KCTC 3954 / HTE831</strain>
    </source>
</reference>
<sequence>MDSCGLIVEYNPFHNGHQYHINQARNVSNSTCIIAIMSGNFLQRGEPAIIDKFHRTKAALHGGADIVIELPYTFAVQNSDRFANGAIQTLNKFGVSSVCFGSESGSMDPFFQAYKTIKNSSEAFDNLLKDNLSDGLSFPDAATAVYETLGLTEGNLDLSKPNNILGFSYVKAIQEYAPTIKPLTIQRKNNDFHDESINGSIASATSIRKQILQSDSMDDDVHNAIPIETLHQLQSYKDKTAIWHDFEQYFPLLRYRVLTMSIKELQNIQGVVEGLEYRIQQTASDALSFVDWMHKIKTKRYTWTRIQRIFIHILTNTKKDENYVDESPSYIRILGMNKQGQQYLNYHKKNFDVPIITSIANTTHSMLAIEERATKAYYSIIPAKLQRKMFKQELQGPIII</sequence>
<feature type="chain" id="PRO_0000147177" description="tRNA(Met) cytidine acetate ligase">
    <location>
        <begin position="1"/>
        <end position="400"/>
    </location>
</feature>
<feature type="binding site" evidence="1">
    <location>
        <begin position="7"/>
        <end position="20"/>
    </location>
    <ligand>
        <name>ATP</name>
        <dbReference type="ChEBI" id="CHEBI:30616"/>
    </ligand>
</feature>
<feature type="binding site" evidence="1">
    <location>
        <position position="101"/>
    </location>
    <ligand>
        <name>ATP</name>
        <dbReference type="ChEBI" id="CHEBI:30616"/>
    </ligand>
</feature>
<feature type="binding site" evidence="1">
    <location>
        <position position="162"/>
    </location>
    <ligand>
        <name>ATP</name>
        <dbReference type="ChEBI" id="CHEBI:30616"/>
    </ligand>
</feature>
<feature type="binding site" evidence="1">
    <location>
        <position position="187"/>
    </location>
    <ligand>
        <name>ATP</name>
        <dbReference type="ChEBI" id="CHEBI:30616"/>
    </ligand>
</feature>
<gene>
    <name evidence="1" type="primary">tmcAL</name>
    <name type="ordered locus">OB1454</name>
</gene>
<evidence type="ECO:0000255" key="1">
    <source>
        <dbReference type="HAMAP-Rule" id="MF_01539"/>
    </source>
</evidence>
<comment type="function">
    <text evidence="1">Catalyzes the formation of N(4)-acetylcytidine (ac(4)C) at the wobble position of elongator tRNA(Met), using acetate and ATP as substrates. First activates an acetate ion to form acetyladenylate (Ac-AMP) and then transfers the acetyl group to tRNA to form ac(4)C34.</text>
</comment>
<comment type="catalytic activity">
    <reaction evidence="1">
        <text>cytidine(34) in elongator tRNA(Met) + acetate + ATP = N(4)-acetylcytidine(34) in elongator tRNA(Met) + AMP + diphosphate</text>
        <dbReference type="Rhea" id="RHEA:58144"/>
        <dbReference type="Rhea" id="RHEA-COMP:10693"/>
        <dbReference type="Rhea" id="RHEA-COMP:10694"/>
        <dbReference type="ChEBI" id="CHEBI:30089"/>
        <dbReference type="ChEBI" id="CHEBI:30616"/>
        <dbReference type="ChEBI" id="CHEBI:33019"/>
        <dbReference type="ChEBI" id="CHEBI:74900"/>
        <dbReference type="ChEBI" id="CHEBI:82748"/>
        <dbReference type="ChEBI" id="CHEBI:456215"/>
    </reaction>
</comment>
<comment type="subcellular location">
    <subcellularLocation>
        <location evidence="1">Cytoplasm</location>
    </subcellularLocation>
</comment>
<comment type="similarity">
    <text evidence="1">Belongs to the TmcAL family.</text>
</comment>
<proteinExistence type="inferred from homology"/>
<accession>Q8ER61</accession>
<organism>
    <name type="scientific">Oceanobacillus iheyensis (strain DSM 14371 / CIP 107618 / JCM 11309 / KCTC 3954 / HTE831)</name>
    <dbReference type="NCBI Taxonomy" id="221109"/>
    <lineage>
        <taxon>Bacteria</taxon>
        <taxon>Bacillati</taxon>
        <taxon>Bacillota</taxon>
        <taxon>Bacilli</taxon>
        <taxon>Bacillales</taxon>
        <taxon>Bacillaceae</taxon>
        <taxon>Oceanobacillus</taxon>
    </lineage>
</organism>
<keyword id="KW-0067">ATP-binding</keyword>
<keyword id="KW-0963">Cytoplasm</keyword>
<keyword id="KW-0436">Ligase</keyword>
<keyword id="KW-0547">Nucleotide-binding</keyword>
<keyword id="KW-1185">Reference proteome</keyword>
<keyword id="KW-0694">RNA-binding</keyword>
<keyword id="KW-0819">tRNA processing</keyword>
<keyword id="KW-0820">tRNA-binding</keyword>
<protein>
    <recommendedName>
        <fullName evidence="1">tRNA(Met) cytidine acetate ligase</fullName>
        <ecNumber evidence="1">6.3.4.-</ecNumber>
    </recommendedName>
</protein>
<dbReference type="EC" id="6.3.4.-" evidence="1"/>
<dbReference type="EMBL" id="BA000028">
    <property type="protein sequence ID" value="BAC13410.1"/>
    <property type="molecule type" value="Genomic_DNA"/>
</dbReference>
<dbReference type="RefSeq" id="WP_011065855.1">
    <property type="nucleotide sequence ID" value="NC_004193.1"/>
</dbReference>
<dbReference type="SMR" id="Q8ER61"/>
<dbReference type="STRING" id="221109.gene:10733694"/>
<dbReference type="KEGG" id="oih:OB1454"/>
<dbReference type="eggNOG" id="COG1323">
    <property type="taxonomic scope" value="Bacteria"/>
</dbReference>
<dbReference type="HOGENOM" id="CLU_038915_0_2_9"/>
<dbReference type="OrthoDB" id="9769796at2"/>
<dbReference type="PhylomeDB" id="Q8ER61"/>
<dbReference type="Proteomes" id="UP000000822">
    <property type="component" value="Chromosome"/>
</dbReference>
<dbReference type="GO" id="GO:0005737">
    <property type="term" value="C:cytoplasm"/>
    <property type="evidence" value="ECO:0007669"/>
    <property type="project" value="UniProtKB-SubCell"/>
</dbReference>
<dbReference type="GO" id="GO:0005524">
    <property type="term" value="F:ATP binding"/>
    <property type="evidence" value="ECO:0007669"/>
    <property type="project" value="UniProtKB-KW"/>
</dbReference>
<dbReference type="GO" id="GO:0016879">
    <property type="term" value="F:ligase activity, forming carbon-nitrogen bonds"/>
    <property type="evidence" value="ECO:0007669"/>
    <property type="project" value="UniProtKB-UniRule"/>
</dbReference>
<dbReference type="GO" id="GO:0000049">
    <property type="term" value="F:tRNA binding"/>
    <property type="evidence" value="ECO:0007669"/>
    <property type="project" value="UniProtKB-KW"/>
</dbReference>
<dbReference type="GO" id="GO:0006400">
    <property type="term" value="P:tRNA modification"/>
    <property type="evidence" value="ECO:0007669"/>
    <property type="project" value="UniProtKB-UniRule"/>
</dbReference>
<dbReference type="Gene3D" id="3.40.50.620">
    <property type="entry name" value="HUPs"/>
    <property type="match status" value="1"/>
</dbReference>
<dbReference type="HAMAP" id="MF_01539">
    <property type="entry name" value="TmcAL"/>
    <property type="match status" value="1"/>
</dbReference>
<dbReference type="InterPro" id="IPR014729">
    <property type="entry name" value="Rossmann-like_a/b/a_fold"/>
</dbReference>
<dbReference type="InterPro" id="IPR008513">
    <property type="entry name" value="tRNA(Met)_cyd_acetate_ligase"/>
</dbReference>
<dbReference type="NCBIfam" id="NF010191">
    <property type="entry name" value="PRK13670.1"/>
    <property type="match status" value="1"/>
</dbReference>
<dbReference type="PANTHER" id="PTHR37825">
    <property type="entry name" value="TRNA(MET) CYTIDINE ACETATE LIGASE"/>
    <property type="match status" value="1"/>
</dbReference>
<dbReference type="PANTHER" id="PTHR37825:SF1">
    <property type="entry name" value="TRNA(MET) CYTIDINE ACETATE LIGASE"/>
    <property type="match status" value="1"/>
</dbReference>
<dbReference type="Pfam" id="PF05636">
    <property type="entry name" value="HIGH_NTase1"/>
    <property type="match status" value="1"/>
</dbReference>
<dbReference type="SUPFAM" id="SSF52374">
    <property type="entry name" value="Nucleotidylyl transferase"/>
    <property type="match status" value="1"/>
</dbReference>